<comment type="subcellular location">
    <subcellularLocation>
        <location>Mitochondrion</location>
    </subcellularLocation>
</comment>
<comment type="similarity">
    <text evidence="1">Belongs to the universal ribosomal protein uS8 family.</text>
</comment>
<reference key="1">
    <citation type="journal article" date="1995" name="J. Mol. Biol.">
        <title>The mitochondrial DNA of the amoeboid protozoon, Acanthamoeba castellanii: complete sequence, gene content and genome organization.</title>
        <authorList>
            <person name="Burger G."/>
            <person name="Plante I."/>
            <person name="Lonergan K.M."/>
            <person name="Gray M.W."/>
        </authorList>
    </citation>
    <scope>NUCLEOTIDE SEQUENCE [GENOMIC DNA]</scope>
    <source>
        <strain>ATCC 30010 / Neff</strain>
    </source>
</reference>
<evidence type="ECO:0000305" key="1"/>
<accession>P46757</accession>
<feature type="chain" id="PRO_0000126601" description="Small ribosomal subunit protein uS8m">
    <location>
        <begin position="1"/>
        <end position="127"/>
    </location>
</feature>
<protein>
    <recommendedName>
        <fullName evidence="1">Small ribosomal subunit protein uS8m</fullName>
    </recommendedName>
    <alternativeName>
        <fullName>Ribosomal protein S8, mitochondrial</fullName>
    </alternativeName>
</protein>
<name>RT08_ACACA</name>
<dbReference type="EMBL" id="U12386">
    <property type="protein sequence ID" value="AAD11846.1"/>
    <property type="molecule type" value="Genomic_DNA"/>
</dbReference>
<dbReference type="PIR" id="S53854">
    <property type="entry name" value="S53854"/>
</dbReference>
<dbReference type="RefSeq" id="NP_042553.1">
    <property type="nucleotide sequence ID" value="NC_001637.1"/>
</dbReference>
<dbReference type="SMR" id="P46757"/>
<dbReference type="GeneID" id="1734050"/>
<dbReference type="GO" id="GO:0005739">
    <property type="term" value="C:mitochondrion"/>
    <property type="evidence" value="ECO:0007669"/>
    <property type="project" value="UniProtKB-SubCell"/>
</dbReference>
<dbReference type="GO" id="GO:1990904">
    <property type="term" value="C:ribonucleoprotein complex"/>
    <property type="evidence" value="ECO:0007669"/>
    <property type="project" value="UniProtKB-KW"/>
</dbReference>
<dbReference type="GO" id="GO:0005840">
    <property type="term" value="C:ribosome"/>
    <property type="evidence" value="ECO:0007669"/>
    <property type="project" value="UniProtKB-KW"/>
</dbReference>
<dbReference type="GO" id="GO:0003735">
    <property type="term" value="F:structural constituent of ribosome"/>
    <property type="evidence" value="ECO:0007669"/>
    <property type="project" value="InterPro"/>
</dbReference>
<dbReference type="GO" id="GO:0006412">
    <property type="term" value="P:translation"/>
    <property type="evidence" value="ECO:0007669"/>
    <property type="project" value="InterPro"/>
</dbReference>
<dbReference type="FunFam" id="3.30.1490.10:FF:000001">
    <property type="entry name" value="30S ribosomal protein S8"/>
    <property type="match status" value="1"/>
</dbReference>
<dbReference type="Gene3D" id="3.30.1370.30">
    <property type="match status" value="1"/>
</dbReference>
<dbReference type="Gene3D" id="3.30.1490.10">
    <property type="match status" value="1"/>
</dbReference>
<dbReference type="InterPro" id="IPR000630">
    <property type="entry name" value="Ribosomal_uS8"/>
</dbReference>
<dbReference type="InterPro" id="IPR035987">
    <property type="entry name" value="Ribosomal_uS8_sf"/>
</dbReference>
<dbReference type="PANTHER" id="PTHR11758">
    <property type="entry name" value="40S RIBOSOMAL PROTEIN S15A"/>
    <property type="match status" value="1"/>
</dbReference>
<dbReference type="Pfam" id="PF00410">
    <property type="entry name" value="Ribosomal_S8"/>
    <property type="match status" value="1"/>
</dbReference>
<dbReference type="SUPFAM" id="SSF56047">
    <property type="entry name" value="Ribosomal protein S8"/>
    <property type="match status" value="1"/>
</dbReference>
<proteinExistence type="inferred from homology"/>
<gene>
    <name type="primary">RPS8</name>
</gene>
<organism>
    <name type="scientific">Acanthamoeba castellanii</name>
    <name type="common">Amoeba</name>
    <dbReference type="NCBI Taxonomy" id="5755"/>
    <lineage>
        <taxon>Eukaryota</taxon>
        <taxon>Amoebozoa</taxon>
        <taxon>Discosea</taxon>
        <taxon>Longamoebia</taxon>
        <taxon>Centramoebida</taxon>
        <taxon>Acanthamoebidae</taxon>
        <taxon>Acanthamoeba</taxon>
    </lineage>
</organism>
<keyword id="KW-0496">Mitochondrion</keyword>
<keyword id="KW-0687">Ribonucleoprotein</keyword>
<keyword id="KW-0689">Ribosomal protein</keyword>
<geneLocation type="mitochondrion"/>
<sequence length="127" mass="14352">MSLLSNMISIVKVGYNARHLQVIVQNSKLCINVLSVLYKLGYIRGFIIKDQKNITILLKYINNKPAVRNIAVISTPGRRTYLKHKKLEKFLTKKDSGFLILSTSKGILTDEESNMFKIGGEALLKIN</sequence>